<evidence type="ECO:0000255" key="1">
    <source>
        <dbReference type="HAMAP-Rule" id="MF_01325"/>
    </source>
</evidence>
<evidence type="ECO:0000256" key="2">
    <source>
        <dbReference type="SAM" id="MobiDB-lite"/>
    </source>
</evidence>
<evidence type="ECO:0000305" key="3"/>
<gene>
    <name evidence="1" type="primary">rpl3</name>
    <name type="ordered locus">YG5714_1415</name>
</gene>
<name>RL3_SACI7</name>
<comment type="function">
    <text evidence="1">One of the primary rRNA binding proteins, it binds directly near the 3'-end of the 23S rRNA, where it nucleates assembly of the 50S subunit.</text>
</comment>
<comment type="subunit">
    <text evidence="1">Part of the 50S ribosomal subunit. Forms a cluster with proteins L14 and L24e.</text>
</comment>
<comment type="similarity">
    <text evidence="1">Belongs to the universal ribosomal protein uL3 family.</text>
</comment>
<organism>
    <name type="scientific">Saccharolobus islandicus (strain Y.G.57.14 / Yellowstone #1)</name>
    <name type="common">Sulfolobus islandicus</name>
    <dbReference type="NCBI Taxonomy" id="439386"/>
    <lineage>
        <taxon>Archaea</taxon>
        <taxon>Thermoproteota</taxon>
        <taxon>Thermoprotei</taxon>
        <taxon>Sulfolobales</taxon>
        <taxon>Sulfolobaceae</taxon>
        <taxon>Saccharolobus</taxon>
    </lineage>
</organism>
<accession>C3NEE3</accession>
<reference key="1">
    <citation type="journal article" date="2009" name="Proc. Natl. Acad. Sci. U.S.A.">
        <title>Biogeography of the Sulfolobus islandicus pan-genome.</title>
        <authorList>
            <person name="Reno M.L."/>
            <person name="Held N.L."/>
            <person name="Fields C.J."/>
            <person name="Burke P.V."/>
            <person name="Whitaker R.J."/>
        </authorList>
    </citation>
    <scope>NUCLEOTIDE SEQUENCE [LARGE SCALE GENOMIC DNA]</scope>
    <source>
        <strain>Y.G.57.14 / Yellowstone #1</strain>
    </source>
</reference>
<sequence>MGHRKLASPRRGSAGLRPRKRSSELLPTPRTWPQINSPNPKLLGFVGYKVGMSHVFMIDDWPNSPTNGKEIYMPVTVLEVPPIIPLALRAYAVDGKGEPNVITEYWSPSSLQFLDITRRIHSLSSFLKNDESKKKFEEKFGSKLDLIKSNLDRIVYFRLLVATQPRKIPSLGKKVPDLVEIQIGGGEKKAQLDYALNVLGKEISIKDVFKEGQLIDVVGVTKGKGFAGVIKRYSVVELPRWHKHRKGSRKIGTRGPSLGTPSYTPQPGQLGFHRRTEYNKRIIKIGDDPKEINPAGGFVRYGIVRNTYILLEGSILGSKKRPIFLREAVRPSYVFENAPKITYVNLLSKQG</sequence>
<dbReference type="EMBL" id="CP001403">
    <property type="protein sequence ID" value="ACP45682.1"/>
    <property type="molecule type" value="Genomic_DNA"/>
</dbReference>
<dbReference type="RefSeq" id="WP_012713734.1">
    <property type="nucleotide sequence ID" value="NC_012622.1"/>
</dbReference>
<dbReference type="SMR" id="C3NEE3"/>
<dbReference type="KEGG" id="siy:YG5714_1415"/>
<dbReference type="HOGENOM" id="CLU_033361_2_0_2"/>
<dbReference type="Proteomes" id="UP000002308">
    <property type="component" value="Chromosome"/>
</dbReference>
<dbReference type="GO" id="GO:0022625">
    <property type="term" value="C:cytosolic large ribosomal subunit"/>
    <property type="evidence" value="ECO:0007669"/>
    <property type="project" value="TreeGrafter"/>
</dbReference>
<dbReference type="GO" id="GO:0019843">
    <property type="term" value="F:rRNA binding"/>
    <property type="evidence" value="ECO:0007669"/>
    <property type="project" value="UniProtKB-UniRule"/>
</dbReference>
<dbReference type="GO" id="GO:0003735">
    <property type="term" value="F:structural constituent of ribosome"/>
    <property type="evidence" value="ECO:0007669"/>
    <property type="project" value="InterPro"/>
</dbReference>
<dbReference type="GO" id="GO:0006412">
    <property type="term" value="P:translation"/>
    <property type="evidence" value="ECO:0007669"/>
    <property type="project" value="UniProtKB-UniRule"/>
</dbReference>
<dbReference type="Gene3D" id="3.30.1430.10">
    <property type="match status" value="1"/>
</dbReference>
<dbReference type="Gene3D" id="4.10.960.10">
    <property type="entry name" value="Ribosomal protein L3, domain 3"/>
    <property type="match status" value="1"/>
</dbReference>
<dbReference type="Gene3D" id="2.40.30.10">
    <property type="entry name" value="Translation factors"/>
    <property type="match status" value="1"/>
</dbReference>
<dbReference type="HAMAP" id="MF_01325_A">
    <property type="entry name" value="Ribosomal_uL3_A"/>
    <property type="match status" value="1"/>
</dbReference>
<dbReference type="InterPro" id="IPR045077">
    <property type="entry name" value="L3_arc_euk"/>
</dbReference>
<dbReference type="InterPro" id="IPR044892">
    <property type="entry name" value="Ribosomal_L3_dom_3_arc_sf"/>
</dbReference>
<dbReference type="InterPro" id="IPR000597">
    <property type="entry name" value="Ribosomal_uL3"/>
</dbReference>
<dbReference type="InterPro" id="IPR019928">
    <property type="entry name" value="Ribosomal_uL3_arc"/>
</dbReference>
<dbReference type="InterPro" id="IPR019926">
    <property type="entry name" value="Ribosomal_uL3_CS"/>
</dbReference>
<dbReference type="InterPro" id="IPR009000">
    <property type="entry name" value="Transl_B-barrel_sf"/>
</dbReference>
<dbReference type="NCBIfam" id="TIGR03626">
    <property type="entry name" value="L3_arch"/>
    <property type="match status" value="1"/>
</dbReference>
<dbReference type="NCBIfam" id="NF003261">
    <property type="entry name" value="PRK04231.1"/>
    <property type="match status" value="1"/>
</dbReference>
<dbReference type="PANTHER" id="PTHR11363">
    <property type="entry name" value="60S RIBOSOMAL PROTEIN L3-RELATED"/>
    <property type="match status" value="1"/>
</dbReference>
<dbReference type="PANTHER" id="PTHR11363:SF5">
    <property type="entry name" value="LARGE RIBOSOMAL SUBUNIT PROTEIN UL3"/>
    <property type="match status" value="1"/>
</dbReference>
<dbReference type="Pfam" id="PF00297">
    <property type="entry name" value="Ribosomal_L3"/>
    <property type="match status" value="1"/>
</dbReference>
<dbReference type="SUPFAM" id="SSF50447">
    <property type="entry name" value="Translation proteins"/>
    <property type="match status" value="1"/>
</dbReference>
<dbReference type="PROSITE" id="PS00474">
    <property type="entry name" value="RIBOSOMAL_L3"/>
    <property type="match status" value="1"/>
</dbReference>
<protein>
    <recommendedName>
        <fullName evidence="1">Large ribosomal subunit protein uL3</fullName>
    </recommendedName>
    <alternativeName>
        <fullName evidence="3">50S ribosomal protein L3</fullName>
    </alternativeName>
</protein>
<feature type="chain" id="PRO_1000214526" description="Large ribosomal subunit protein uL3">
    <location>
        <begin position="1"/>
        <end position="351"/>
    </location>
</feature>
<feature type="region of interest" description="Disordered" evidence="2">
    <location>
        <begin position="1"/>
        <end position="31"/>
    </location>
</feature>
<feature type="region of interest" description="Disordered" evidence="2">
    <location>
        <begin position="246"/>
        <end position="271"/>
    </location>
</feature>
<keyword id="KW-0687">Ribonucleoprotein</keyword>
<keyword id="KW-0689">Ribosomal protein</keyword>
<keyword id="KW-0694">RNA-binding</keyword>
<keyword id="KW-0699">rRNA-binding</keyword>
<proteinExistence type="inferred from homology"/>